<name>THIC_THENN</name>
<accession>B9KAI3</accession>
<organism>
    <name type="scientific">Thermotoga neapolitana (strain ATCC 49049 / DSM 4359 / NBRC 107923 / NS-E)</name>
    <dbReference type="NCBI Taxonomy" id="309803"/>
    <lineage>
        <taxon>Bacteria</taxon>
        <taxon>Thermotogati</taxon>
        <taxon>Thermotogota</taxon>
        <taxon>Thermotogae</taxon>
        <taxon>Thermotogales</taxon>
        <taxon>Thermotogaceae</taxon>
        <taxon>Thermotoga</taxon>
    </lineage>
</organism>
<protein>
    <recommendedName>
        <fullName evidence="1">Phosphomethylpyrimidine synthase</fullName>
        <ecNumber evidence="1">4.1.99.17</ecNumber>
    </recommendedName>
    <alternativeName>
        <fullName evidence="1">Hydroxymethylpyrimidine phosphate synthase</fullName>
        <shortName evidence="1">HMP-P synthase</shortName>
        <shortName evidence="1">HMP-phosphate synthase</shortName>
        <shortName evidence="1">HMPP synthase</shortName>
    </alternativeName>
    <alternativeName>
        <fullName evidence="1">Thiamine biosynthesis protein ThiC</fullName>
    </alternativeName>
</protein>
<evidence type="ECO:0000255" key="1">
    <source>
        <dbReference type="HAMAP-Rule" id="MF_00089"/>
    </source>
</evidence>
<comment type="function">
    <text evidence="1">Catalyzes the synthesis of the hydroxymethylpyrimidine phosphate (HMP-P) moiety of thiamine from aminoimidazole ribotide (AIR) in a radical S-adenosyl-L-methionine (SAM)-dependent reaction.</text>
</comment>
<comment type="catalytic activity">
    <reaction evidence="1">
        <text>5-amino-1-(5-phospho-beta-D-ribosyl)imidazole + S-adenosyl-L-methionine = 4-amino-2-methyl-5-(phosphooxymethyl)pyrimidine + CO + 5'-deoxyadenosine + formate + L-methionine + 3 H(+)</text>
        <dbReference type="Rhea" id="RHEA:24840"/>
        <dbReference type="ChEBI" id="CHEBI:15378"/>
        <dbReference type="ChEBI" id="CHEBI:15740"/>
        <dbReference type="ChEBI" id="CHEBI:17245"/>
        <dbReference type="ChEBI" id="CHEBI:17319"/>
        <dbReference type="ChEBI" id="CHEBI:57844"/>
        <dbReference type="ChEBI" id="CHEBI:58354"/>
        <dbReference type="ChEBI" id="CHEBI:59789"/>
        <dbReference type="ChEBI" id="CHEBI:137981"/>
        <dbReference type="EC" id="4.1.99.17"/>
    </reaction>
</comment>
<comment type="cofactor">
    <cofactor evidence="1">
        <name>[4Fe-4S] cluster</name>
        <dbReference type="ChEBI" id="CHEBI:49883"/>
    </cofactor>
    <text evidence="1">Binds 1 [4Fe-4S] cluster per subunit. The cluster is coordinated with 3 cysteines and an exchangeable S-adenosyl-L-methionine.</text>
</comment>
<comment type="pathway">
    <text evidence="1">Cofactor biosynthesis; thiamine diphosphate biosynthesis.</text>
</comment>
<comment type="similarity">
    <text evidence="1">Belongs to the ThiC family.</text>
</comment>
<reference key="1">
    <citation type="submission" date="2007-11" db="EMBL/GenBank/DDBJ databases">
        <title>The genome sequence of the hyperthermophilic bacterium Thermotoga neapolitana.</title>
        <authorList>
            <person name="Lim S.K."/>
            <person name="Kim J.S."/>
            <person name="Cha S.H."/>
            <person name="Park B.C."/>
            <person name="Lee D.S."/>
            <person name="Tae H.S."/>
            <person name="Kim S.-J."/>
            <person name="Kim J.J."/>
            <person name="Park K.J."/>
            <person name="Lee S.Y."/>
        </authorList>
    </citation>
    <scope>NUCLEOTIDE SEQUENCE [LARGE SCALE GENOMIC DNA]</scope>
    <source>
        <strain>ATCC 49049 / DSM 4359 / NBRC 107923 / NS-E</strain>
    </source>
</reference>
<dbReference type="EC" id="4.1.99.17" evidence="1"/>
<dbReference type="EMBL" id="CP000916">
    <property type="protein sequence ID" value="ACM23966.1"/>
    <property type="molecule type" value="Genomic_DNA"/>
</dbReference>
<dbReference type="RefSeq" id="WP_015920204.1">
    <property type="nucleotide sequence ID" value="NC_011978.1"/>
</dbReference>
<dbReference type="SMR" id="B9KAI3"/>
<dbReference type="STRING" id="309803.CTN_1790"/>
<dbReference type="KEGG" id="tna:CTN_1790"/>
<dbReference type="eggNOG" id="COG0422">
    <property type="taxonomic scope" value="Bacteria"/>
</dbReference>
<dbReference type="HOGENOM" id="CLU_013181_2_2_0"/>
<dbReference type="UniPathway" id="UPA00060"/>
<dbReference type="Proteomes" id="UP000000445">
    <property type="component" value="Chromosome"/>
</dbReference>
<dbReference type="GO" id="GO:0005829">
    <property type="term" value="C:cytosol"/>
    <property type="evidence" value="ECO:0007669"/>
    <property type="project" value="TreeGrafter"/>
</dbReference>
<dbReference type="GO" id="GO:0051539">
    <property type="term" value="F:4 iron, 4 sulfur cluster binding"/>
    <property type="evidence" value="ECO:0007669"/>
    <property type="project" value="UniProtKB-KW"/>
</dbReference>
<dbReference type="GO" id="GO:0016830">
    <property type="term" value="F:carbon-carbon lyase activity"/>
    <property type="evidence" value="ECO:0007669"/>
    <property type="project" value="InterPro"/>
</dbReference>
<dbReference type="GO" id="GO:0008270">
    <property type="term" value="F:zinc ion binding"/>
    <property type="evidence" value="ECO:0007669"/>
    <property type="project" value="UniProtKB-UniRule"/>
</dbReference>
<dbReference type="GO" id="GO:0009228">
    <property type="term" value="P:thiamine biosynthetic process"/>
    <property type="evidence" value="ECO:0007669"/>
    <property type="project" value="UniProtKB-KW"/>
</dbReference>
<dbReference type="GO" id="GO:0009229">
    <property type="term" value="P:thiamine diphosphate biosynthetic process"/>
    <property type="evidence" value="ECO:0007669"/>
    <property type="project" value="UniProtKB-UniRule"/>
</dbReference>
<dbReference type="FunFam" id="3.20.20.540:FF:000001">
    <property type="entry name" value="Phosphomethylpyrimidine synthase"/>
    <property type="match status" value="1"/>
</dbReference>
<dbReference type="Gene3D" id="3.20.20.540">
    <property type="entry name" value="Radical SAM ThiC family, central domain"/>
    <property type="match status" value="1"/>
</dbReference>
<dbReference type="HAMAP" id="MF_00089">
    <property type="entry name" value="ThiC"/>
    <property type="match status" value="1"/>
</dbReference>
<dbReference type="InterPro" id="IPR037509">
    <property type="entry name" value="ThiC"/>
</dbReference>
<dbReference type="InterPro" id="IPR038521">
    <property type="entry name" value="ThiC/Bza_core_dom"/>
</dbReference>
<dbReference type="InterPro" id="IPR002817">
    <property type="entry name" value="ThiC/BzaA/B"/>
</dbReference>
<dbReference type="NCBIfam" id="NF009895">
    <property type="entry name" value="PRK13352.1"/>
    <property type="match status" value="1"/>
</dbReference>
<dbReference type="NCBIfam" id="TIGR00190">
    <property type="entry name" value="thiC"/>
    <property type="match status" value="1"/>
</dbReference>
<dbReference type="PANTHER" id="PTHR30557:SF1">
    <property type="entry name" value="PHOSPHOMETHYLPYRIMIDINE SYNTHASE, CHLOROPLASTIC"/>
    <property type="match status" value="1"/>
</dbReference>
<dbReference type="PANTHER" id="PTHR30557">
    <property type="entry name" value="THIAMINE BIOSYNTHESIS PROTEIN THIC"/>
    <property type="match status" value="1"/>
</dbReference>
<dbReference type="Pfam" id="PF01964">
    <property type="entry name" value="ThiC_Rad_SAM"/>
    <property type="match status" value="1"/>
</dbReference>
<dbReference type="SFLD" id="SFLDF00407">
    <property type="entry name" value="phosphomethylpyrimidine_syntha"/>
    <property type="match status" value="1"/>
</dbReference>
<dbReference type="SFLD" id="SFLDG01114">
    <property type="entry name" value="phosphomethylpyrimidine_syntha"/>
    <property type="match status" value="1"/>
</dbReference>
<dbReference type="SFLD" id="SFLDS00113">
    <property type="entry name" value="Radical_SAM_Phosphomethylpyrim"/>
    <property type="match status" value="1"/>
</dbReference>
<gene>
    <name evidence="1" type="primary">thiC</name>
    <name type="ordered locus">CTN_1790</name>
</gene>
<keyword id="KW-0004">4Fe-4S</keyword>
<keyword id="KW-0408">Iron</keyword>
<keyword id="KW-0411">Iron-sulfur</keyword>
<keyword id="KW-0456">Lyase</keyword>
<keyword id="KW-0479">Metal-binding</keyword>
<keyword id="KW-0949">S-adenosyl-L-methionine</keyword>
<keyword id="KW-0784">Thiamine biosynthesis</keyword>
<keyword id="KW-0862">Zinc</keyword>
<feature type="chain" id="PRO_1000198065" description="Phosphomethylpyrimidine synthase">
    <location>
        <begin position="1"/>
        <end position="424"/>
    </location>
</feature>
<feature type="binding site" evidence="1">
    <location>
        <position position="66"/>
    </location>
    <ligand>
        <name>substrate</name>
    </ligand>
</feature>
<feature type="binding site" evidence="1">
    <location>
        <position position="95"/>
    </location>
    <ligand>
        <name>substrate</name>
    </ligand>
</feature>
<feature type="binding site" evidence="1">
    <location>
        <position position="124"/>
    </location>
    <ligand>
        <name>substrate</name>
    </ligand>
</feature>
<feature type="binding site" evidence="1">
    <location>
        <position position="163"/>
    </location>
    <ligand>
        <name>substrate</name>
    </ligand>
</feature>
<feature type="binding site" evidence="1">
    <location>
        <begin position="185"/>
        <end position="187"/>
    </location>
    <ligand>
        <name>substrate</name>
    </ligand>
</feature>
<feature type="binding site" evidence="1">
    <location>
        <begin position="226"/>
        <end position="229"/>
    </location>
    <ligand>
        <name>substrate</name>
    </ligand>
</feature>
<feature type="binding site" evidence="1">
    <location>
        <position position="265"/>
    </location>
    <ligand>
        <name>substrate</name>
    </ligand>
</feature>
<feature type="binding site" evidence="1">
    <location>
        <position position="269"/>
    </location>
    <ligand>
        <name>Zn(2+)</name>
        <dbReference type="ChEBI" id="CHEBI:29105"/>
    </ligand>
</feature>
<feature type="binding site" evidence="1">
    <location>
        <position position="292"/>
    </location>
    <ligand>
        <name>substrate</name>
    </ligand>
</feature>
<feature type="binding site" evidence="1">
    <location>
        <position position="333"/>
    </location>
    <ligand>
        <name>Zn(2+)</name>
        <dbReference type="ChEBI" id="CHEBI:29105"/>
    </ligand>
</feature>
<feature type="binding site" evidence="1">
    <location>
        <position position="408"/>
    </location>
    <ligand>
        <name>[4Fe-4S] cluster</name>
        <dbReference type="ChEBI" id="CHEBI:49883"/>
        <note>4Fe-4S-S-AdoMet</note>
    </ligand>
</feature>
<feature type="binding site" evidence="1">
    <location>
        <position position="411"/>
    </location>
    <ligand>
        <name>[4Fe-4S] cluster</name>
        <dbReference type="ChEBI" id="CHEBI:49883"/>
        <note>4Fe-4S-S-AdoMet</note>
    </ligand>
</feature>
<feature type="binding site" evidence="1">
    <location>
        <position position="415"/>
    </location>
    <ligand>
        <name>[4Fe-4S] cluster</name>
        <dbReference type="ChEBI" id="CHEBI:49883"/>
        <note>4Fe-4S-S-AdoMet</note>
    </ligand>
</feature>
<sequence length="424" mass="47358">MTQMEMARKGIVSEEMKKVAEYEGVDVEEVRQKIAEGRAVLPKNKLHRVSKPMIVGEGFSVKVNANIGTSQGFSSIEEEKEKARVAIEYGADSLMVLSTWGDLREIRRTIVEMSPVPVGSVPIYDSAVKSYQMKKNVVDFSEKDFFDMVIAHAEDGIDFMTIHVGVTRRVLERVKNSKRILKIVSRGGAIIAGWMIKNNRENPFYEHFDELLDIAKEYDITLSLGDGMRPGAVVDASDSQQFEELFVMGELVERAREKEVQVMLEGPGHVPLNEVEMNVKLMKKVGKGVPIFLLGPLPTDRAMGYDHIACAIGGALAGYYGADFLCYVTPSEHISLPDVEDVREGVIASKIAAVVADVARGNRKAWELEKRMALARKNFDWETMFDLSLGRDIAKKKYEERPYPDKGCSMCGPFCAIKIAEEFS</sequence>
<proteinExistence type="inferred from homology"/>